<keyword id="KW-0963">Cytoplasm</keyword>
<keyword id="KW-0333">Golgi apparatus</keyword>
<keyword id="KW-0446">Lipid-binding</keyword>
<keyword id="KW-0472">Membrane</keyword>
<keyword id="KW-0653">Protein transport</keyword>
<keyword id="KW-1185">Reference proteome</keyword>
<keyword id="KW-0813">Transport</keyword>
<comment type="function">
    <text evidence="1">Required for retention of late Golgi membrane proteins. Component of the retrieval machinery that functions by direct interaction with the cytosolic tails of certain TGN membrane proteins during the sorting/budding process at the prevacuolar compartment. Binds phosphatidylinositol 3-phosphate (PtdIns(P3)) (By similarity).</text>
</comment>
<comment type="subcellular location">
    <subcellularLocation>
        <location evidence="1">Cytoplasm</location>
    </subcellularLocation>
    <subcellularLocation>
        <location evidence="3">Golgi apparatus membrane</location>
        <topology evidence="3">Peripheral membrane protein</topology>
        <orientation evidence="3">Cytoplasmic side</orientation>
    </subcellularLocation>
    <subcellularLocation>
        <location evidence="3">Prevacuolar compartment membrane</location>
        <topology evidence="3">Peripheral membrane protein</topology>
        <orientation evidence="3">Cytoplasmic side</orientation>
    </subcellularLocation>
</comment>
<comment type="domain">
    <text evidence="1">The PX domain binds phosphatidylinositol 3-phosphate which is necessary for peripheral membrane localization.</text>
</comment>
<comment type="similarity">
    <text evidence="3">Belongs to the sorting nexin family.</text>
</comment>
<evidence type="ECO:0000250" key="1"/>
<evidence type="ECO:0000255" key="2">
    <source>
        <dbReference type="PROSITE-ProRule" id="PRU00147"/>
    </source>
</evidence>
<evidence type="ECO:0000305" key="3"/>
<reference key="1">
    <citation type="journal article" date="2004" name="Science">
        <title>The Ashbya gossypii genome as a tool for mapping the ancient Saccharomyces cerevisiae genome.</title>
        <authorList>
            <person name="Dietrich F.S."/>
            <person name="Voegeli S."/>
            <person name="Brachat S."/>
            <person name="Lerch A."/>
            <person name="Gates K."/>
            <person name="Steiner S."/>
            <person name="Mohr C."/>
            <person name="Poehlmann R."/>
            <person name="Luedi P."/>
            <person name="Choi S."/>
            <person name="Wing R.A."/>
            <person name="Flavier A."/>
            <person name="Gaffney T.D."/>
            <person name="Philippsen P."/>
        </authorList>
    </citation>
    <scope>NUCLEOTIDE SEQUENCE [LARGE SCALE GENOMIC DNA]</scope>
    <source>
        <strain>ATCC 10895 / CBS 109.51 / FGSC 9923 / NRRL Y-1056</strain>
    </source>
</reference>
<reference key="2">
    <citation type="journal article" date="2013" name="G3 (Bethesda)">
        <title>Genomes of Ashbya fungi isolated from insects reveal four mating-type loci, numerous translocations, lack of transposons, and distinct gene duplications.</title>
        <authorList>
            <person name="Dietrich F.S."/>
            <person name="Voegeli S."/>
            <person name="Kuo S."/>
            <person name="Philippsen P."/>
        </authorList>
    </citation>
    <scope>GENOME REANNOTATION</scope>
    <scope>SEQUENCE REVISION TO 78</scope>
    <source>
        <strain>ATCC 10895 / CBS 109.51 / FGSC 9923 / NRRL Y-1056</strain>
    </source>
</reference>
<proteinExistence type="inferred from homology"/>
<protein>
    <recommendedName>
        <fullName>Sorting nexin-3</fullName>
    </recommendedName>
</protein>
<sequence length="163" mass="18850">MRQFQSFSTTVERELAAAPTARPARTAAGYDEPENFLEVEVRDPRTHFPHGDSNRGMYTDYLVVCRTNLPSFPQRVSQVRRRYSDFEFFKRCLFKELSLSAHPRVVIPALPGKILWARRFHDEVIEERREGLAQWLSTVAGHPLLQSGSKVLVRFLQDEVFNG</sequence>
<organism>
    <name type="scientific">Eremothecium gossypii (strain ATCC 10895 / CBS 109.51 / FGSC 9923 / NRRL Y-1056)</name>
    <name type="common">Yeast</name>
    <name type="synonym">Ashbya gossypii</name>
    <dbReference type="NCBI Taxonomy" id="284811"/>
    <lineage>
        <taxon>Eukaryota</taxon>
        <taxon>Fungi</taxon>
        <taxon>Dikarya</taxon>
        <taxon>Ascomycota</taxon>
        <taxon>Saccharomycotina</taxon>
        <taxon>Saccharomycetes</taxon>
        <taxon>Saccharomycetales</taxon>
        <taxon>Saccharomycetaceae</taxon>
        <taxon>Eremothecium</taxon>
    </lineage>
</organism>
<feature type="chain" id="PRO_0000238581" description="Sorting nexin-3">
    <location>
        <begin position="1"/>
        <end position="163"/>
    </location>
</feature>
<feature type="domain" description="PX" evidence="2">
    <location>
        <begin position="39"/>
        <end position="162"/>
    </location>
</feature>
<feature type="binding site" evidence="1">
    <location>
        <position position="82"/>
    </location>
    <ligand>
        <name>a 1,2-diacyl-sn-glycero-3-phospho-(1D-myo-inositol-3-phosphate)</name>
        <dbReference type="ChEBI" id="CHEBI:58088"/>
    </ligand>
</feature>
<feature type="binding site" evidence="1">
    <location>
        <position position="84"/>
    </location>
    <ligand>
        <name>a 1,2-diacyl-sn-glycero-3-phospho-(1D-myo-inositol-3-phosphate)</name>
        <dbReference type="ChEBI" id="CHEBI:58088"/>
    </ligand>
</feature>
<feature type="binding site" evidence="1">
    <location>
        <position position="113"/>
    </location>
    <ligand>
        <name>a 1,2-diacyl-sn-glycero-3-phospho-(1D-myo-inositol-3-phosphate)</name>
        <dbReference type="ChEBI" id="CHEBI:58088"/>
    </ligand>
</feature>
<feature type="binding site" evidence="1">
    <location>
        <position position="119"/>
    </location>
    <ligand>
        <name>a 1,2-diacyl-sn-glycero-3-phospho-(1D-myo-inositol-3-phosphate)</name>
        <dbReference type="ChEBI" id="CHEBI:58088"/>
    </ligand>
</feature>
<feature type="binding site" evidence="1">
    <location>
        <position position="128"/>
    </location>
    <ligand>
        <name>a 1,2-diacyl-sn-glycero-3-phospho-(1D-myo-inositol-3-phosphate)</name>
        <dbReference type="ChEBI" id="CHEBI:58088"/>
    </ligand>
</feature>
<name>SNX3_EREGS</name>
<gene>
    <name type="primary">SNX3</name>
    <name type="ordered locus">ADR390C</name>
</gene>
<dbReference type="EMBL" id="AE016817">
    <property type="protein sequence ID" value="AAS52310.2"/>
    <property type="molecule type" value="Genomic_DNA"/>
</dbReference>
<dbReference type="RefSeq" id="NP_984486.2">
    <property type="nucleotide sequence ID" value="NM_209839.2"/>
</dbReference>
<dbReference type="SMR" id="Q758Y7"/>
<dbReference type="FunCoup" id="Q758Y7">
    <property type="interactions" value="523"/>
</dbReference>
<dbReference type="STRING" id="284811.Q758Y7"/>
<dbReference type="EnsemblFungi" id="AAS52310">
    <property type="protein sequence ID" value="AAS52310"/>
    <property type="gene ID" value="AGOS_ADR390C"/>
</dbReference>
<dbReference type="GeneID" id="4620651"/>
<dbReference type="KEGG" id="ago:AGOS_ADR390C"/>
<dbReference type="eggNOG" id="KOG2527">
    <property type="taxonomic scope" value="Eukaryota"/>
</dbReference>
<dbReference type="HOGENOM" id="CLU_057172_2_1_1"/>
<dbReference type="InParanoid" id="Q758Y7"/>
<dbReference type="OMA" id="NMYTDYE"/>
<dbReference type="OrthoDB" id="5227681at2759"/>
<dbReference type="Proteomes" id="UP000000591">
    <property type="component" value="Chromosome IV"/>
</dbReference>
<dbReference type="GO" id="GO:0031901">
    <property type="term" value="C:early endosome membrane"/>
    <property type="evidence" value="ECO:0000318"/>
    <property type="project" value="GO_Central"/>
</dbReference>
<dbReference type="GO" id="GO:0000139">
    <property type="term" value="C:Golgi membrane"/>
    <property type="evidence" value="ECO:0007669"/>
    <property type="project" value="UniProtKB-SubCell"/>
</dbReference>
<dbReference type="GO" id="GO:0030904">
    <property type="term" value="C:retromer complex"/>
    <property type="evidence" value="ECO:0000318"/>
    <property type="project" value="GO_Central"/>
</dbReference>
<dbReference type="GO" id="GO:0032266">
    <property type="term" value="F:phosphatidylinositol-3-phosphate binding"/>
    <property type="evidence" value="ECO:0000318"/>
    <property type="project" value="GO_Central"/>
</dbReference>
<dbReference type="GO" id="GO:0032456">
    <property type="term" value="P:endocytic recycling"/>
    <property type="evidence" value="ECO:0000318"/>
    <property type="project" value="GO_Central"/>
</dbReference>
<dbReference type="GO" id="GO:0034499">
    <property type="term" value="P:late endosome to Golgi transport"/>
    <property type="evidence" value="ECO:0000318"/>
    <property type="project" value="GO_Central"/>
</dbReference>
<dbReference type="GO" id="GO:0015031">
    <property type="term" value="P:protein transport"/>
    <property type="evidence" value="ECO:0007669"/>
    <property type="project" value="UniProtKB-KW"/>
</dbReference>
<dbReference type="Gene3D" id="3.30.1520.10">
    <property type="entry name" value="Phox-like domain"/>
    <property type="match status" value="1"/>
</dbReference>
<dbReference type="InterPro" id="IPR001683">
    <property type="entry name" value="PX_dom"/>
</dbReference>
<dbReference type="InterPro" id="IPR036871">
    <property type="entry name" value="PX_dom_sf"/>
</dbReference>
<dbReference type="InterPro" id="IPR051074">
    <property type="entry name" value="Sorting_Nexin"/>
</dbReference>
<dbReference type="PANTHER" id="PTHR45963">
    <property type="entry name" value="RE52028P"/>
    <property type="match status" value="1"/>
</dbReference>
<dbReference type="PANTHER" id="PTHR45963:SF2">
    <property type="entry name" value="RE52028P"/>
    <property type="match status" value="1"/>
</dbReference>
<dbReference type="Pfam" id="PF00787">
    <property type="entry name" value="PX"/>
    <property type="match status" value="1"/>
</dbReference>
<dbReference type="SMART" id="SM00312">
    <property type="entry name" value="PX"/>
    <property type="match status" value="1"/>
</dbReference>
<dbReference type="SUPFAM" id="SSF64268">
    <property type="entry name" value="PX domain"/>
    <property type="match status" value="1"/>
</dbReference>
<dbReference type="PROSITE" id="PS50195">
    <property type="entry name" value="PX"/>
    <property type="match status" value="1"/>
</dbReference>
<accession>Q758Y7</accession>